<proteinExistence type="evidence at protein level"/>
<feature type="signal peptide" evidence="2">
    <location>
        <begin position="1"/>
        <end position="19"/>
    </location>
</feature>
<feature type="chain" id="PRO_0000041602" description="Zona pellucida-binding protein 2">
    <location>
        <begin position="20"/>
        <end position="326"/>
    </location>
</feature>
<feature type="glycosylation site" description="N-linked (GlcNAc...) asparagine" evidence="2">
    <location>
        <position position="86"/>
    </location>
</feature>
<feature type="glycosylation site" description="N-linked (GlcNAc...) asparagine" evidence="2">
    <location>
        <position position="220"/>
    </location>
</feature>
<feature type="glycosylation site" description="N-linked (GlcNAc...) asparagine" evidence="2">
    <location>
        <position position="256"/>
    </location>
</feature>
<feature type="splice variant" id="VSP_011684" description="In isoform 3." evidence="4">
    <location>
        <begin position="1"/>
        <end position="54"/>
    </location>
</feature>
<feature type="splice variant" id="VSP_011685" description="In isoform 2." evidence="5">
    <location>
        <begin position="135"/>
        <end position="207"/>
    </location>
</feature>
<feature type="sequence conflict" description="In Ref. 1; AAP83948/AAP83949 and 2; BAB24388." evidence="6" ref="1 2">
    <original>D</original>
    <variation>E</variation>
    <location>
        <position position="224"/>
    </location>
</feature>
<name>ZPBP2_MOUSE</name>
<organism>
    <name type="scientific">Mus musculus</name>
    <name type="common">Mouse</name>
    <dbReference type="NCBI Taxonomy" id="10090"/>
    <lineage>
        <taxon>Eukaryota</taxon>
        <taxon>Metazoa</taxon>
        <taxon>Chordata</taxon>
        <taxon>Craniata</taxon>
        <taxon>Vertebrata</taxon>
        <taxon>Euteleostomi</taxon>
        <taxon>Mammalia</taxon>
        <taxon>Eutheria</taxon>
        <taxon>Euarchontoglires</taxon>
        <taxon>Glires</taxon>
        <taxon>Rodentia</taxon>
        <taxon>Myomorpha</taxon>
        <taxon>Muroidea</taxon>
        <taxon>Muridae</taxon>
        <taxon>Murinae</taxon>
        <taxon>Mus</taxon>
        <taxon>Mus</taxon>
    </lineage>
</organism>
<reference key="1">
    <citation type="submission" date="2003-03" db="EMBL/GenBank/DDBJ databases">
        <title>Characterization of zona pellucida binding protein 2 (ZPBP2), a paralog of ZPBP1.</title>
        <authorList>
            <person name="Lin Y.-N."/>
            <person name="Yan W."/>
            <person name="Burns K.H."/>
            <person name="Matzuk M.M."/>
        </authorList>
    </citation>
    <scope>NUCLEOTIDE SEQUENCE [MRNA] (ISOFORMS 1 AND 2)</scope>
    <source>
        <strain>C57W</strain>
    </source>
</reference>
<reference key="2">
    <citation type="journal article" date="2005" name="Science">
        <title>The transcriptional landscape of the mammalian genome.</title>
        <authorList>
            <person name="Carninci P."/>
            <person name="Kasukawa T."/>
            <person name="Katayama S."/>
            <person name="Gough J."/>
            <person name="Frith M.C."/>
            <person name="Maeda N."/>
            <person name="Oyama R."/>
            <person name="Ravasi T."/>
            <person name="Lenhard B."/>
            <person name="Wells C."/>
            <person name="Kodzius R."/>
            <person name="Shimokawa K."/>
            <person name="Bajic V.B."/>
            <person name="Brenner S.E."/>
            <person name="Batalov S."/>
            <person name="Forrest A.R."/>
            <person name="Zavolan M."/>
            <person name="Davis M.J."/>
            <person name="Wilming L.G."/>
            <person name="Aidinis V."/>
            <person name="Allen J.E."/>
            <person name="Ambesi-Impiombato A."/>
            <person name="Apweiler R."/>
            <person name="Aturaliya R.N."/>
            <person name="Bailey T.L."/>
            <person name="Bansal M."/>
            <person name="Baxter L."/>
            <person name="Beisel K.W."/>
            <person name="Bersano T."/>
            <person name="Bono H."/>
            <person name="Chalk A.M."/>
            <person name="Chiu K.P."/>
            <person name="Choudhary V."/>
            <person name="Christoffels A."/>
            <person name="Clutterbuck D.R."/>
            <person name="Crowe M.L."/>
            <person name="Dalla E."/>
            <person name="Dalrymple B.P."/>
            <person name="de Bono B."/>
            <person name="Della Gatta G."/>
            <person name="di Bernardo D."/>
            <person name="Down T."/>
            <person name="Engstrom P."/>
            <person name="Fagiolini M."/>
            <person name="Faulkner G."/>
            <person name="Fletcher C.F."/>
            <person name="Fukushima T."/>
            <person name="Furuno M."/>
            <person name="Futaki S."/>
            <person name="Gariboldi M."/>
            <person name="Georgii-Hemming P."/>
            <person name="Gingeras T.R."/>
            <person name="Gojobori T."/>
            <person name="Green R.E."/>
            <person name="Gustincich S."/>
            <person name="Harbers M."/>
            <person name="Hayashi Y."/>
            <person name="Hensch T.K."/>
            <person name="Hirokawa N."/>
            <person name="Hill D."/>
            <person name="Huminiecki L."/>
            <person name="Iacono M."/>
            <person name="Ikeo K."/>
            <person name="Iwama A."/>
            <person name="Ishikawa T."/>
            <person name="Jakt M."/>
            <person name="Kanapin A."/>
            <person name="Katoh M."/>
            <person name="Kawasawa Y."/>
            <person name="Kelso J."/>
            <person name="Kitamura H."/>
            <person name="Kitano H."/>
            <person name="Kollias G."/>
            <person name="Krishnan S.P."/>
            <person name="Kruger A."/>
            <person name="Kummerfeld S.K."/>
            <person name="Kurochkin I.V."/>
            <person name="Lareau L.F."/>
            <person name="Lazarevic D."/>
            <person name="Lipovich L."/>
            <person name="Liu J."/>
            <person name="Liuni S."/>
            <person name="McWilliam S."/>
            <person name="Madan Babu M."/>
            <person name="Madera M."/>
            <person name="Marchionni L."/>
            <person name="Matsuda H."/>
            <person name="Matsuzawa S."/>
            <person name="Miki H."/>
            <person name="Mignone F."/>
            <person name="Miyake S."/>
            <person name="Morris K."/>
            <person name="Mottagui-Tabar S."/>
            <person name="Mulder N."/>
            <person name="Nakano N."/>
            <person name="Nakauchi H."/>
            <person name="Ng P."/>
            <person name="Nilsson R."/>
            <person name="Nishiguchi S."/>
            <person name="Nishikawa S."/>
            <person name="Nori F."/>
            <person name="Ohara O."/>
            <person name="Okazaki Y."/>
            <person name="Orlando V."/>
            <person name="Pang K.C."/>
            <person name="Pavan W.J."/>
            <person name="Pavesi G."/>
            <person name="Pesole G."/>
            <person name="Petrovsky N."/>
            <person name="Piazza S."/>
            <person name="Reed J."/>
            <person name="Reid J.F."/>
            <person name="Ring B.Z."/>
            <person name="Ringwald M."/>
            <person name="Rost B."/>
            <person name="Ruan Y."/>
            <person name="Salzberg S.L."/>
            <person name="Sandelin A."/>
            <person name="Schneider C."/>
            <person name="Schoenbach C."/>
            <person name="Sekiguchi K."/>
            <person name="Semple C.A."/>
            <person name="Seno S."/>
            <person name="Sessa L."/>
            <person name="Sheng Y."/>
            <person name="Shibata Y."/>
            <person name="Shimada H."/>
            <person name="Shimada K."/>
            <person name="Silva D."/>
            <person name="Sinclair B."/>
            <person name="Sperling S."/>
            <person name="Stupka E."/>
            <person name="Sugiura K."/>
            <person name="Sultana R."/>
            <person name="Takenaka Y."/>
            <person name="Taki K."/>
            <person name="Tammoja K."/>
            <person name="Tan S.L."/>
            <person name="Tang S."/>
            <person name="Taylor M.S."/>
            <person name="Tegner J."/>
            <person name="Teichmann S.A."/>
            <person name="Ueda H.R."/>
            <person name="van Nimwegen E."/>
            <person name="Verardo R."/>
            <person name="Wei C.L."/>
            <person name="Yagi K."/>
            <person name="Yamanishi H."/>
            <person name="Zabarovsky E."/>
            <person name="Zhu S."/>
            <person name="Zimmer A."/>
            <person name="Hide W."/>
            <person name="Bult C."/>
            <person name="Grimmond S.M."/>
            <person name="Teasdale R.D."/>
            <person name="Liu E.T."/>
            <person name="Brusic V."/>
            <person name="Quackenbush J."/>
            <person name="Wahlestedt C."/>
            <person name="Mattick J.S."/>
            <person name="Hume D.A."/>
            <person name="Kai C."/>
            <person name="Sasaki D."/>
            <person name="Tomaru Y."/>
            <person name="Fukuda S."/>
            <person name="Kanamori-Katayama M."/>
            <person name="Suzuki M."/>
            <person name="Aoki J."/>
            <person name="Arakawa T."/>
            <person name="Iida J."/>
            <person name="Imamura K."/>
            <person name="Itoh M."/>
            <person name="Kato T."/>
            <person name="Kawaji H."/>
            <person name="Kawagashira N."/>
            <person name="Kawashima T."/>
            <person name="Kojima M."/>
            <person name="Kondo S."/>
            <person name="Konno H."/>
            <person name="Nakano K."/>
            <person name="Ninomiya N."/>
            <person name="Nishio T."/>
            <person name="Okada M."/>
            <person name="Plessy C."/>
            <person name="Shibata K."/>
            <person name="Shiraki T."/>
            <person name="Suzuki S."/>
            <person name="Tagami M."/>
            <person name="Waki K."/>
            <person name="Watahiki A."/>
            <person name="Okamura-Oho Y."/>
            <person name="Suzuki H."/>
            <person name="Kawai J."/>
            <person name="Hayashizaki Y."/>
        </authorList>
    </citation>
    <scope>NUCLEOTIDE SEQUENCE [LARGE SCALE MRNA] (ISOFORM 3)</scope>
    <source>
        <strain>C57BL/6J</strain>
        <tissue>Testis</tissue>
    </source>
</reference>
<reference key="3">
    <citation type="journal article" date="2009" name="PLoS Biol.">
        <title>Lineage-specific biology revealed by a finished genome assembly of the mouse.</title>
        <authorList>
            <person name="Church D.M."/>
            <person name="Goodstadt L."/>
            <person name="Hillier L.W."/>
            <person name="Zody M.C."/>
            <person name="Goldstein S."/>
            <person name="She X."/>
            <person name="Bult C.J."/>
            <person name="Agarwala R."/>
            <person name="Cherry J.L."/>
            <person name="DiCuccio M."/>
            <person name="Hlavina W."/>
            <person name="Kapustin Y."/>
            <person name="Meric P."/>
            <person name="Maglott D."/>
            <person name="Birtle Z."/>
            <person name="Marques A.C."/>
            <person name="Graves T."/>
            <person name="Zhou S."/>
            <person name="Teague B."/>
            <person name="Potamousis K."/>
            <person name="Churas C."/>
            <person name="Place M."/>
            <person name="Herschleb J."/>
            <person name="Runnheim R."/>
            <person name="Forrest D."/>
            <person name="Amos-Landgraf J."/>
            <person name="Schwartz D.C."/>
            <person name="Cheng Z."/>
            <person name="Lindblad-Toh K."/>
            <person name="Eichler E.E."/>
            <person name="Ponting C.P."/>
        </authorList>
    </citation>
    <scope>NUCLEOTIDE SEQUENCE [LARGE SCALE GENOMIC DNA]</scope>
    <source>
        <strain>C57BL/6J</strain>
    </source>
</reference>
<reference key="4">
    <citation type="journal article" date="2007" name="Mol. Cell. Biol.">
        <title>Loss of zona pellucida binding proteins in the acrosomal matrix disrupts acrosome biogenesis and sperm morphogenesis.</title>
        <authorList>
            <person name="Lin Y.N."/>
            <person name="Roy A."/>
            <person name="Yan W."/>
            <person name="Burns K.H."/>
            <person name="Matzuk M.M."/>
        </authorList>
    </citation>
    <scope>FUNCTION</scope>
    <scope>SUBCELLULAR LOCATION</scope>
    <scope>TISSUE SPECIFICITY</scope>
    <scope>DEVELOPMENTAL STAGE</scope>
    <scope>GLYCOSYLATION</scope>
    <scope>DISRUPTION PHENOTYPE</scope>
</reference>
<reference key="5">
    <citation type="journal article" date="2010" name="Cell">
        <title>A tissue-specific atlas of mouse protein phosphorylation and expression.</title>
        <authorList>
            <person name="Huttlin E.L."/>
            <person name="Jedrychowski M.P."/>
            <person name="Elias J.E."/>
            <person name="Goswami T."/>
            <person name="Rad R."/>
            <person name="Beausoleil S.A."/>
            <person name="Villen J."/>
            <person name="Haas W."/>
            <person name="Sowa M.E."/>
            <person name="Gygi S.P."/>
        </authorList>
    </citation>
    <scope>IDENTIFICATION BY MASS SPECTROMETRY [LARGE SCALE ANALYSIS]</scope>
    <source>
        <tissue>Testis</tissue>
    </source>
</reference>
<sequence>MLAWALLYAVLWSLAGVGSQRSSLFNIKGFVYGTVGHPVKIYVKLHQASPVLICMDIDRANKETVDPTYLWTGPNENTLKGNSQINITNTGELVLKDFLEPLSGLYSCMLSYKTIKAETQEETMIKKKYDFLVFAYREPDYSYHMAVRFTTGSCVGRHNDLLFRVLKKILDNLISDLLCHVIEPSYKCHFVKLPERDFLYELFIAFQVNPFAPGWRSLCNRSADCEDITNHNVLKARDRMEEFFRKQAHILHHHFNRTVPAMHFVDHSFQVTRIDNCRPGFGKNEGLHSNCATCCVVCSPGTFSPDVDVTCQICVSVHIYGAKACP</sequence>
<protein>
    <recommendedName>
        <fullName>Zona pellucida-binding protein 2</fullName>
    </recommendedName>
</protein>
<evidence type="ECO:0000250" key="1"/>
<evidence type="ECO:0000255" key="2"/>
<evidence type="ECO:0000269" key="3">
    <source>
    </source>
</evidence>
<evidence type="ECO:0000303" key="4">
    <source>
    </source>
</evidence>
<evidence type="ECO:0000303" key="5">
    <source ref="1"/>
</evidence>
<evidence type="ECO:0000305" key="6"/>
<keyword id="KW-0025">Alternative splicing</keyword>
<keyword id="KW-0968">Cytoplasmic vesicle</keyword>
<keyword id="KW-0325">Glycoprotein</keyword>
<keyword id="KW-1185">Reference proteome</keyword>
<keyword id="KW-0964">Secreted</keyword>
<keyword id="KW-0732">Signal</keyword>
<dbReference type="EMBL" id="AY251601">
    <property type="protein sequence ID" value="AAP83948.1"/>
    <property type="molecule type" value="mRNA"/>
</dbReference>
<dbReference type="EMBL" id="AY251602">
    <property type="protein sequence ID" value="AAP83949.1"/>
    <property type="molecule type" value="mRNA"/>
</dbReference>
<dbReference type="EMBL" id="AK006058">
    <property type="protein sequence ID" value="BAB24388.1"/>
    <property type="molecule type" value="mRNA"/>
</dbReference>
<dbReference type="EMBL" id="AL591125">
    <property type="status" value="NOT_ANNOTATED_CDS"/>
    <property type="molecule type" value="Genomic_DNA"/>
</dbReference>
<dbReference type="CCDS" id="CCDS25353.1">
    <molecule id="Q6X786-1"/>
</dbReference>
<dbReference type="CCDS" id="CCDS25354.1">
    <molecule id="Q6X786-2"/>
</dbReference>
<dbReference type="CCDS" id="CCDS48903.1">
    <molecule id="Q6X786-3"/>
</dbReference>
<dbReference type="RefSeq" id="NP_001159966.1">
    <molecule id="Q6X786-3"/>
    <property type="nucleotide sequence ID" value="NM_001166494.1"/>
</dbReference>
<dbReference type="RefSeq" id="NP_001159967.1">
    <molecule id="Q6X786-3"/>
    <property type="nucleotide sequence ID" value="NM_001166495.1"/>
</dbReference>
<dbReference type="RefSeq" id="NP_081337.2">
    <molecule id="Q6X786-1"/>
    <property type="nucleotide sequence ID" value="NM_027061.2"/>
</dbReference>
<dbReference type="RefSeq" id="NP_955451.2">
    <molecule id="Q6X786-2"/>
    <property type="nucleotide sequence ID" value="NM_199419.3"/>
</dbReference>
<dbReference type="FunCoup" id="Q6X786">
    <property type="interactions" value="3"/>
</dbReference>
<dbReference type="STRING" id="10090.ENSMUSP00000017339"/>
<dbReference type="GlyCosmos" id="Q6X786">
    <property type="glycosylation" value="3 sites, No reported glycans"/>
</dbReference>
<dbReference type="GlyGen" id="Q6X786">
    <property type="glycosylation" value="3 sites"/>
</dbReference>
<dbReference type="SwissPalm" id="Q6X786"/>
<dbReference type="PaxDb" id="10090-ENSMUSP00000017339"/>
<dbReference type="ProteomicsDB" id="275156">
    <molecule id="Q6X786-1"/>
</dbReference>
<dbReference type="ProteomicsDB" id="275157">
    <molecule id="Q6X786-2"/>
</dbReference>
<dbReference type="ProteomicsDB" id="275158">
    <molecule id="Q6X786-3"/>
</dbReference>
<dbReference type="Antibodypedia" id="16341">
    <property type="antibodies" value="64 antibodies from 16 providers"/>
</dbReference>
<dbReference type="Ensembl" id="ENSMUST00000017339.12">
    <molecule id="Q6X786-1"/>
    <property type="protein sequence ID" value="ENSMUSP00000017339.6"/>
    <property type="gene ID" value="ENSMUSG00000017195.16"/>
</dbReference>
<dbReference type="Ensembl" id="ENSMUST00000081033.13">
    <molecule id="Q6X786-2"/>
    <property type="protein sequence ID" value="ENSMUSP00000079822.7"/>
    <property type="gene ID" value="ENSMUSG00000017195.16"/>
</dbReference>
<dbReference type="Ensembl" id="ENSMUST00000107509.8">
    <molecule id="Q6X786-3"/>
    <property type="protein sequence ID" value="ENSMUSP00000103133.2"/>
    <property type="gene ID" value="ENSMUSG00000017195.16"/>
</dbReference>
<dbReference type="Ensembl" id="ENSMUST00000107511.8">
    <molecule id="Q6X786-3"/>
    <property type="protein sequence ID" value="ENSMUSP00000103135.2"/>
    <property type="gene ID" value="ENSMUSG00000017195.16"/>
</dbReference>
<dbReference type="GeneID" id="69376"/>
<dbReference type="KEGG" id="mmu:69376"/>
<dbReference type="UCSC" id="uc007lgo.2">
    <molecule id="Q6X786-1"/>
    <property type="organism name" value="mouse"/>
</dbReference>
<dbReference type="AGR" id="MGI:1916626"/>
<dbReference type="CTD" id="124626"/>
<dbReference type="MGI" id="MGI:1916626">
    <property type="gene designation" value="Zpbp2"/>
</dbReference>
<dbReference type="VEuPathDB" id="HostDB:ENSMUSG00000017195"/>
<dbReference type="eggNOG" id="ENOG502R75S">
    <property type="taxonomic scope" value="Eukaryota"/>
</dbReference>
<dbReference type="GeneTree" id="ENSGT00520000055647"/>
<dbReference type="HOGENOM" id="CLU_056016_1_0_1"/>
<dbReference type="InParanoid" id="Q6X786"/>
<dbReference type="OMA" id="KSCVGKY"/>
<dbReference type="OrthoDB" id="9403351at2759"/>
<dbReference type="PhylomeDB" id="Q6X786"/>
<dbReference type="TreeFam" id="TF335677"/>
<dbReference type="BioGRID-ORCS" id="69376">
    <property type="hits" value="4 hits in 76 CRISPR screens"/>
</dbReference>
<dbReference type="ChiTaRS" id="Zpbp2">
    <property type="organism name" value="mouse"/>
</dbReference>
<dbReference type="PRO" id="PR:Q6X786"/>
<dbReference type="Proteomes" id="UP000000589">
    <property type="component" value="Chromosome 11"/>
</dbReference>
<dbReference type="RNAct" id="Q6X786">
    <property type="molecule type" value="protein"/>
</dbReference>
<dbReference type="Bgee" id="ENSMUSG00000017195">
    <property type="expression patterns" value="Expressed in spermatid and 37 other cell types or tissues"/>
</dbReference>
<dbReference type="ExpressionAtlas" id="Q6X786">
    <property type="expression patterns" value="baseline and differential"/>
</dbReference>
<dbReference type="GO" id="GO:0001669">
    <property type="term" value="C:acrosomal vesicle"/>
    <property type="evidence" value="ECO:0000314"/>
    <property type="project" value="MGI"/>
</dbReference>
<dbReference type="GO" id="GO:0044297">
    <property type="term" value="C:cell body"/>
    <property type="evidence" value="ECO:0000314"/>
    <property type="project" value="MGI"/>
</dbReference>
<dbReference type="GO" id="GO:0005576">
    <property type="term" value="C:extracellular region"/>
    <property type="evidence" value="ECO:0007669"/>
    <property type="project" value="UniProtKB-SubCell"/>
</dbReference>
<dbReference type="GO" id="GO:0016020">
    <property type="term" value="C:membrane"/>
    <property type="evidence" value="ECO:0007669"/>
    <property type="project" value="GOC"/>
</dbReference>
<dbReference type="GO" id="GO:0002199">
    <property type="term" value="C:zona pellucida receptor complex"/>
    <property type="evidence" value="ECO:0000314"/>
    <property type="project" value="MGI"/>
</dbReference>
<dbReference type="GO" id="GO:0001675">
    <property type="term" value="P:acrosome assembly"/>
    <property type="evidence" value="ECO:0000315"/>
    <property type="project" value="MGI"/>
</dbReference>
<dbReference type="GO" id="GO:0007339">
    <property type="term" value="P:binding of sperm to zona pellucida"/>
    <property type="evidence" value="ECO:0000314"/>
    <property type="project" value="MGI"/>
</dbReference>
<dbReference type="GO" id="GO:0032922">
    <property type="term" value="P:circadian regulation of gene expression"/>
    <property type="evidence" value="ECO:0000315"/>
    <property type="project" value="MGI"/>
</dbReference>
<dbReference type="GO" id="GO:0046466">
    <property type="term" value="P:membrane lipid catabolic process"/>
    <property type="evidence" value="ECO:0000315"/>
    <property type="project" value="MGI"/>
</dbReference>
<dbReference type="GO" id="GO:0002638">
    <property type="term" value="P:negative regulation of immunoglobulin production"/>
    <property type="evidence" value="ECO:0000315"/>
    <property type="project" value="MGI"/>
</dbReference>
<dbReference type="GO" id="GO:0006665">
    <property type="term" value="P:sphingolipid metabolic process"/>
    <property type="evidence" value="ECO:0000315"/>
    <property type="project" value="MGI"/>
</dbReference>
<dbReference type="InterPro" id="IPR010857">
    <property type="entry name" value="Sp38-bd"/>
</dbReference>
<dbReference type="InterPro" id="IPR048805">
    <property type="entry name" value="ZPBP1/2_C"/>
</dbReference>
<dbReference type="InterPro" id="IPR048806">
    <property type="entry name" value="ZPBP1/2_N"/>
</dbReference>
<dbReference type="PANTHER" id="PTHR15443">
    <property type="entry name" value="ZONA PELLUCIDA BINDING PROTEIN SP38"/>
    <property type="match status" value="1"/>
</dbReference>
<dbReference type="PANTHER" id="PTHR15443:SF4">
    <property type="entry name" value="ZONA PELLUCIDA-BINDING PROTEIN 2"/>
    <property type="match status" value="1"/>
</dbReference>
<dbReference type="Pfam" id="PF20626">
    <property type="entry name" value="EGF_Sp38_C"/>
    <property type="match status" value="1"/>
</dbReference>
<dbReference type="Pfam" id="PF07354">
    <property type="entry name" value="Sp38"/>
    <property type="match status" value="1"/>
</dbReference>
<gene>
    <name type="primary">Zpbp2</name>
</gene>
<comment type="function">
    <text evidence="3">Is implicated in sperm-oocyte interaction during fertilization.</text>
</comment>
<comment type="subcellular location">
    <subcellularLocation>
        <location evidence="3">Cytoplasmic vesicle</location>
        <location evidence="3">Secretory vesicle</location>
        <location evidence="3">Acrosome</location>
    </subcellularLocation>
    <subcellularLocation>
        <location evidence="1">Secreted</location>
    </subcellularLocation>
    <text evidence="3">Released after the acrosomal reaction.</text>
</comment>
<comment type="alternative products">
    <event type="alternative splicing"/>
    <isoform>
        <id>Q6X786-1</id>
        <name>1</name>
        <sequence type="displayed"/>
    </isoform>
    <isoform>
        <id>Q6X786-2</id>
        <name>2</name>
        <sequence type="described" ref="VSP_011685"/>
    </isoform>
    <isoform>
        <id>Q6X786-3</id>
        <name>3</name>
        <sequence type="described" ref="VSP_011684"/>
    </isoform>
</comment>
<comment type="tissue specificity">
    <text evidence="3">Expressed specifically in male germ cells.</text>
</comment>
<comment type="developmental stage">
    <text evidence="3">Expressed from the mid-pachytene spermatocyte stage to the early elongating spermatid stage.</text>
</comment>
<comment type="PTM">
    <text evidence="3">N-glycosylated.</text>
</comment>
<comment type="disruption phenotype">
    <text evidence="3">Male mice are subfertile with sperm showing reduced ability to penetrate zona pellucida and displaying subtle morphological deformation, including shortened apical hook, smaller apical angle and bulges in acrosome region.</text>
</comment>
<comment type="similarity">
    <text evidence="6">Belongs to the zona pellucida-binding protein Sp38 family.</text>
</comment>
<accession>Q6X786</accession>
<accession>A2A4Y0</accession>
<accession>Q6X785</accession>
<accession>Q9DA91</accession>